<feature type="chain" id="PRO_1000135470" description="tRNA uridine(34) hydroxylase">
    <location>
        <begin position="1"/>
        <end position="350"/>
    </location>
</feature>
<feature type="domain" description="Rhodanese" evidence="2">
    <location>
        <begin position="146"/>
        <end position="240"/>
    </location>
</feature>
<feature type="active site" description="Cysteine persulfide intermediate" evidence="2">
    <location>
        <position position="200"/>
    </location>
</feature>
<accession>B7LFG6</accession>
<dbReference type="EC" id="1.14.-.-" evidence="2"/>
<dbReference type="EMBL" id="CU928145">
    <property type="protein sequence ID" value="CAU97028.1"/>
    <property type="molecule type" value="Genomic_DNA"/>
</dbReference>
<dbReference type="RefSeq" id="WP_001144616.1">
    <property type="nucleotide sequence ID" value="NC_011748.1"/>
</dbReference>
<dbReference type="SMR" id="B7LFG6"/>
<dbReference type="KEGG" id="eck:EC55989_1169"/>
<dbReference type="HOGENOM" id="CLU_038878_1_1_6"/>
<dbReference type="Proteomes" id="UP000000746">
    <property type="component" value="Chromosome"/>
</dbReference>
<dbReference type="GO" id="GO:0016705">
    <property type="term" value="F:oxidoreductase activity, acting on paired donors, with incorporation or reduction of molecular oxygen"/>
    <property type="evidence" value="ECO:0007669"/>
    <property type="project" value="UniProtKB-UniRule"/>
</dbReference>
<dbReference type="GO" id="GO:0006400">
    <property type="term" value="P:tRNA modification"/>
    <property type="evidence" value="ECO:0007669"/>
    <property type="project" value="UniProtKB-UniRule"/>
</dbReference>
<dbReference type="CDD" id="cd01518">
    <property type="entry name" value="RHOD_YceA"/>
    <property type="match status" value="1"/>
</dbReference>
<dbReference type="Gene3D" id="3.30.70.100">
    <property type="match status" value="1"/>
</dbReference>
<dbReference type="Gene3D" id="3.40.250.10">
    <property type="entry name" value="Rhodanese-like domain"/>
    <property type="match status" value="1"/>
</dbReference>
<dbReference type="HAMAP" id="MF_00469">
    <property type="entry name" value="TrhO"/>
    <property type="match status" value="1"/>
</dbReference>
<dbReference type="InterPro" id="IPR001763">
    <property type="entry name" value="Rhodanese-like_dom"/>
</dbReference>
<dbReference type="InterPro" id="IPR036873">
    <property type="entry name" value="Rhodanese-like_dom_sf"/>
</dbReference>
<dbReference type="InterPro" id="IPR022111">
    <property type="entry name" value="Rhodanese_C"/>
</dbReference>
<dbReference type="InterPro" id="IPR020936">
    <property type="entry name" value="TrhO"/>
</dbReference>
<dbReference type="InterPro" id="IPR040503">
    <property type="entry name" value="TRHO_N"/>
</dbReference>
<dbReference type="NCBIfam" id="NF001133">
    <property type="entry name" value="PRK00142.1-1"/>
    <property type="match status" value="1"/>
</dbReference>
<dbReference type="PANTHER" id="PTHR43846:SF1">
    <property type="entry name" value="TRNA URIDINE(34) HYDROXYLASE"/>
    <property type="match status" value="1"/>
</dbReference>
<dbReference type="PANTHER" id="PTHR43846">
    <property type="entry name" value="UPF0176 PROTEIN YCEA"/>
    <property type="match status" value="1"/>
</dbReference>
<dbReference type="Pfam" id="PF00581">
    <property type="entry name" value="Rhodanese"/>
    <property type="match status" value="1"/>
</dbReference>
<dbReference type="Pfam" id="PF12368">
    <property type="entry name" value="Rhodanese_C"/>
    <property type="match status" value="1"/>
</dbReference>
<dbReference type="Pfam" id="PF17773">
    <property type="entry name" value="UPF0176_N"/>
    <property type="match status" value="1"/>
</dbReference>
<dbReference type="SMART" id="SM00450">
    <property type="entry name" value="RHOD"/>
    <property type="match status" value="1"/>
</dbReference>
<dbReference type="SUPFAM" id="SSF52821">
    <property type="entry name" value="Rhodanese/Cell cycle control phosphatase"/>
    <property type="match status" value="1"/>
</dbReference>
<dbReference type="PROSITE" id="PS50206">
    <property type="entry name" value="RHODANESE_3"/>
    <property type="match status" value="1"/>
</dbReference>
<proteinExistence type="inferred from homology"/>
<sequence length="350" mass="39735">MPVLHNRISNDALKAKMLAESEPRTTISFYKYFHIADPKATRDALYQLFTALNVFGRVYLAHEGINAQISVPASNVETFRAQLYAFDPALEGLRLNIALDDDGKSFWVLRMKVRDRIVADGIDDPHFDASNVGEYLQAAEVNAMLDDPDALFIDMRNHYEYEVGHFENALEIPADTFREQLPKAVEMMQAHKDKKIVMYCTGGIRCEKASAWMKHNGFNKVWHIEGGIIEYARKAREQGLPVRFIGKNFVFDERMGERISDEIIAHCHQCGAPCDSHTNCKNDGCHLLFIQCPVCAEKYKGCCSEICCEESALPPEEQRRRRAGRENGNKIFNKSRGRLNTTLGIPDPTE</sequence>
<protein>
    <recommendedName>
        <fullName evidence="2">tRNA uridine(34) hydroxylase</fullName>
        <ecNumber evidence="2">1.14.-.-</ecNumber>
    </recommendedName>
    <alternativeName>
        <fullName evidence="2">tRNA hydroxylation protein O</fullName>
    </alternativeName>
</protein>
<evidence type="ECO:0000250" key="1">
    <source>
        <dbReference type="UniProtKB" id="P24188"/>
    </source>
</evidence>
<evidence type="ECO:0000255" key="2">
    <source>
        <dbReference type="HAMAP-Rule" id="MF_00469"/>
    </source>
</evidence>
<gene>
    <name evidence="2" type="primary">trhO</name>
    <name type="synonym">yceA</name>
    <name type="ordered locus">EC55989_1169</name>
</gene>
<keyword id="KW-0560">Oxidoreductase</keyword>
<keyword id="KW-1185">Reference proteome</keyword>
<keyword id="KW-0819">tRNA processing</keyword>
<reference key="1">
    <citation type="journal article" date="2009" name="PLoS Genet.">
        <title>Organised genome dynamics in the Escherichia coli species results in highly diverse adaptive paths.</title>
        <authorList>
            <person name="Touchon M."/>
            <person name="Hoede C."/>
            <person name="Tenaillon O."/>
            <person name="Barbe V."/>
            <person name="Baeriswyl S."/>
            <person name="Bidet P."/>
            <person name="Bingen E."/>
            <person name="Bonacorsi S."/>
            <person name="Bouchier C."/>
            <person name="Bouvet O."/>
            <person name="Calteau A."/>
            <person name="Chiapello H."/>
            <person name="Clermont O."/>
            <person name="Cruveiller S."/>
            <person name="Danchin A."/>
            <person name="Diard M."/>
            <person name="Dossat C."/>
            <person name="Karoui M.E."/>
            <person name="Frapy E."/>
            <person name="Garry L."/>
            <person name="Ghigo J.M."/>
            <person name="Gilles A.M."/>
            <person name="Johnson J."/>
            <person name="Le Bouguenec C."/>
            <person name="Lescat M."/>
            <person name="Mangenot S."/>
            <person name="Martinez-Jehanne V."/>
            <person name="Matic I."/>
            <person name="Nassif X."/>
            <person name="Oztas S."/>
            <person name="Petit M.A."/>
            <person name="Pichon C."/>
            <person name="Rouy Z."/>
            <person name="Ruf C.S."/>
            <person name="Schneider D."/>
            <person name="Tourret J."/>
            <person name="Vacherie B."/>
            <person name="Vallenet D."/>
            <person name="Medigue C."/>
            <person name="Rocha E.P.C."/>
            <person name="Denamur E."/>
        </authorList>
    </citation>
    <scope>NUCLEOTIDE SEQUENCE [LARGE SCALE GENOMIC DNA]</scope>
    <source>
        <strain>55989 / EAEC</strain>
    </source>
</reference>
<organism>
    <name type="scientific">Escherichia coli (strain 55989 / EAEC)</name>
    <dbReference type="NCBI Taxonomy" id="585055"/>
    <lineage>
        <taxon>Bacteria</taxon>
        <taxon>Pseudomonadati</taxon>
        <taxon>Pseudomonadota</taxon>
        <taxon>Gammaproteobacteria</taxon>
        <taxon>Enterobacterales</taxon>
        <taxon>Enterobacteriaceae</taxon>
        <taxon>Escherichia</taxon>
    </lineage>
</organism>
<name>TRHO_ECO55</name>
<comment type="function">
    <text evidence="1">Catalyzes oxygen-dependent 5-hydroxyuridine (ho5U) modification at position 34 in tRNAs, the first step in 5-carboxymethoxyuridine (cmo5U) biosynthesis. May be part of an alternate pathway, which is able to bypass cmo5U biogenesis in a subset of tRNAs under aerobic conditions.</text>
</comment>
<comment type="catalytic activity">
    <reaction evidence="2">
        <text>uridine(34) in tRNA + AH2 + O2 = 5-hydroxyuridine(34) in tRNA + A + H2O</text>
        <dbReference type="Rhea" id="RHEA:64224"/>
        <dbReference type="Rhea" id="RHEA-COMP:11727"/>
        <dbReference type="Rhea" id="RHEA-COMP:13381"/>
        <dbReference type="ChEBI" id="CHEBI:13193"/>
        <dbReference type="ChEBI" id="CHEBI:15377"/>
        <dbReference type="ChEBI" id="CHEBI:15379"/>
        <dbReference type="ChEBI" id="CHEBI:17499"/>
        <dbReference type="ChEBI" id="CHEBI:65315"/>
        <dbReference type="ChEBI" id="CHEBI:136877"/>
    </reaction>
</comment>
<comment type="similarity">
    <text evidence="2">Belongs to the TrhO family.</text>
</comment>